<dbReference type="EMBL" id="Y07760">
    <property type="protein sequence ID" value="CAA69046.1"/>
    <property type="molecule type" value="Genomic_DNA"/>
</dbReference>
<dbReference type="RefSeq" id="NP_044208.1">
    <property type="nucleotide sequence ID" value="NC_001734.1"/>
</dbReference>
<dbReference type="GeneID" id="1488942"/>
<dbReference type="KEGG" id="vg:1488942"/>
<dbReference type="Proteomes" id="UP000126130">
    <property type="component" value="Segment"/>
</dbReference>
<dbReference type="GO" id="GO:0030430">
    <property type="term" value="C:host cell cytoplasm"/>
    <property type="evidence" value="ECO:0007669"/>
    <property type="project" value="UniProtKB-SubCell"/>
</dbReference>
<dbReference type="GO" id="GO:0042025">
    <property type="term" value="C:host cell nucleus"/>
    <property type="evidence" value="ECO:0007669"/>
    <property type="project" value="UniProtKB-SubCell"/>
</dbReference>
<dbReference type="InterPro" id="IPR007615">
    <property type="entry name" value="Adenovirus_E4_30/34"/>
</dbReference>
<dbReference type="Pfam" id="PF04528">
    <property type="entry name" value="Adeno_E4_34"/>
    <property type="match status" value="1"/>
</dbReference>
<sequence>MFHNCRMEGSCNAETTSHVTAVVRAPIFCNCFALCLEIPILWDDLLYRHEKLLFGGFTCNGGAELILNSHCCLADAQMWQVHCHCSDSLSLQCLSATQVLKEFLEEFVMGGFVNKKYLWYREFVNSSRPDEINYVGSIMFRNIHYIYFRLSFFSTVHQACMLAIQRCISPELGVVFKSTYNYWLVLKCKSCSLQNYCALKSCAFWVRSIIDRVLREVEKIPVVLHRTTSKAEERRQTALKQAMMYGRCRHIQNLCLVNLNAFLHF</sequence>
<evidence type="ECO:0000250" key="1">
    <source>
        <dbReference type="UniProtKB" id="P03239"/>
    </source>
</evidence>
<evidence type="ECO:0000305" key="2"/>
<keyword id="KW-0244">Early protein</keyword>
<keyword id="KW-1035">Host cytoplasm</keyword>
<keyword id="KW-1048">Host nucleus</keyword>
<feature type="chain" id="PRO_0000221781" description="Early E4 31 kDa protein">
    <location>
        <begin position="1"/>
        <end position="265"/>
    </location>
</feature>
<reference key="1">
    <citation type="journal article" date="1997" name="J. Gen. Virol.">
        <title>Complete DNA sequence of canine adenovirus type 1.</title>
        <authorList>
            <person name="Morrison M.D."/>
            <person name="Onions D.E."/>
            <person name="Nicolson L."/>
        </authorList>
    </citation>
    <scope>NUCLEOTIDE SEQUENCE [LARGE SCALE GENOMIC DNA]</scope>
</reference>
<comment type="function">
    <text evidence="1">Plays a major role to prevent cellular inhibition of viral genome replication by nuclear bodies. Assembles an SCF-like E3 ubiquitin ligase complex based on the cellular proteins ELOB, ELOC, CUL5 and RBX1, in cooperation with viral E1B-55K. This viral RING-type ligase ubiquitinates cellular substrates prior to proteasomal degradation: p53/TP53, LIG4, MRE11-RAD50-NBS1 (MRN) complex, ITGA3, DAXX and BLM.</text>
</comment>
<comment type="subunit">
    <text evidence="1">Interacts with E1B-55k.</text>
</comment>
<comment type="subcellular location">
    <subcellularLocation>
        <location evidence="1">Host nucleus</location>
    </subcellularLocation>
    <subcellularLocation>
        <location evidence="1">Host cytoplasm</location>
    </subcellularLocation>
</comment>
<comment type="similarity">
    <text evidence="2">Belongs to the adenoviridae E4 30 to 34 kDa protein family.</text>
</comment>
<accession>Q96690</accession>
<proteinExistence type="inferred from homology"/>
<organism>
    <name type="scientific">Canine adenovirus serotype 1 (strain RI261)</name>
    <name type="common">CAdV-1</name>
    <name type="synonym">Canine adenovirus 1 (strain RI261)</name>
    <dbReference type="NCBI Taxonomy" id="69151"/>
    <lineage>
        <taxon>Viruses</taxon>
        <taxon>Varidnaviria</taxon>
        <taxon>Bamfordvirae</taxon>
        <taxon>Preplasmiviricota</taxon>
        <taxon>Tectiliviricetes</taxon>
        <taxon>Rowavirales</taxon>
        <taxon>Adenoviridae</taxon>
        <taxon>Mastadenovirus</taxon>
        <taxon>Canine mastadenovirus A</taxon>
    </lineage>
</organism>
<protein>
    <recommendedName>
        <fullName>Early E4 31 kDa protein</fullName>
    </recommendedName>
</protein>
<name>E434_ADECR</name>
<organismHost>
    <name type="scientific">Canis lupus familiaris</name>
    <name type="common">Dog</name>
    <name type="synonym">Canis familiaris</name>
    <dbReference type="NCBI Taxonomy" id="9615"/>
</organismHost>